<reference key="1">
    <citation type="journal article" date="2008" name="Environ. Microbiol.">
        <title>The genome of Erwinia tasmaniensis strain Et1/99, a non-pathogenic bacterium in the genus Erwinia.</title>
        <authorList>
            <person name="Kube M."/>
            <person name="Migdoll A.M."/>
            <person name="Mueller I."/>
            <person name="Kuhl H."/>
            <person name="Beck A."/>
            <person name="Reinhardt R."/>
            <person name="Geider K."/>
        </authorList>
    </citation>
    <scope>NUCLEOTIDE SEQUENCE [LARGE SCALE GENOMIC DNA]</scope>
    <source>
        <strain>DSM 17950 / CFBP 7177 / CIP 109463 / NCPPB 4357 / Et1/99</strain>
    </source>
</reference>
<name>QUEA_ERWT9</name>
<sequence length="355" mass="39139">MRVADFTFELPESLIAHYPQAERSGCRLLSLNGSDGALTHGVFTDLLHKLNPGDLLVFNNTRVIPARIFGRKASGGKIEVLVERMLDDTRVLAHVRSSKAPKPGSDLLLGDDESVQATMLARHDTLFEIEFNDARPVLDILNSIGHMPLPPYIDRPDEDADRELYQTVYSQKPGAVAAPTAGLHFDEPLLVALREKGIETAFVTLHVGAGTFQPVRVDTIEDHIMHAEYAEVPQDVVDAVLACKARGNRVIAVGTTSVRSLESAAQAAENTLIAPFFGDTKIFIYPGYHYQVIDALVTNFHLPESTLIMLVSAFAGYKHTMRAYQQAVAEQYRFFSYGDAMFITRNPQAFAEIPG</sequence>
<gene>
    <name evidence="1" type="primary">queA</name>
    <name type="ordered locus">ETA_25400</name>
</gene>
<organism>
    <name type="scientific">Erwinia tasmaniensis (strain DSM 17950 / CFBP 7177 / CIP 109463 / NCPPB 4357 / Et1/99)</name>
    <dbReference type="NCBI Taxonomy" id="465817"/>
    <lineage>
        <taxon>Bacteria</taxon>
        <taxon>Pseudomonadati</taxon>
        <taxon>Pseudomonadota</taxon>
        <taxon>Gammaproteobacteria</taxon>
        <taxon>Enterobacterales</taxon>
        <taxon>Erwiniaceae</taxon>
        <taxon>Erwinia</taxon>
    </lineage>
</organism>
<keyword id="KW-0963">Cytoplasm</keyword>
<keyword id="KW-0671">Queuosine biosynthesis</keyword>
<keyword id="KW-1185">Reference proteome</keyword>
<keyword id="KW-0949">S-adenosyl-L-methionine</keyword>
<keyword id="KW-0808">Transferase</keyword>
<protein>
    <recommendedName>
        <fullName evidence="1">S-adenosylmethionine:tRNA ribosyltransferase-isomerase</fullName>
        <ecNumber evidence="1">2.4.99.17</ecNumber>
    </recommendedName>
    <alternativeName>
        <fullName evidence="1">Queuosine biosynthesis protein QueA</fullName>
    </alternativeName>
</protein>
<accession>B2VHQ4</accession>
<proteinExistence type="inferred from homology"/>
<dbReference type="EC" id="2.4.99.17" evidence="1"/>
<dbReference type="EMBL" id="CU468135">
    <property type="protein sequence ID" value="CAO97586.1"/>
    <property type="molecule type" value="Genomic_DNA"/>
</dbReference>
<dbReference type="RefSeq" id="WP_012442251.1">
    <property type="nucleotide sequence ID" value="NC_010694.1"/>
</dbReference>
<dbReference type="SMR" id="B2VHQ4"/>
<dbReference type="STRING" id="465817.ETA_25400"/>
<dbReference type="KEGG" id="eta:ETA_25400"/>
<dbReference type="eggNOG" id="COG0809">
    <property type="taxonomic scope" value="Bacteria"/>
</dbReference>
<dbReference type="HOGENOM" id="CLU_039110_1_0_6"/>
<dbReference type="OrthoDB" id="9805933at2"/>
<dbReference type="UniPathway" id="UPA00392"/>
<dbReference type="Proteomes" id="UP000001726">
    <property type="component" value="Chromosome"/>
</dbReference>
<dbReference type="GO" id="GO:0005737">
    <property type="term" value="C:cytoplasm"/>
    <property type="evidence" value="ECO:0007669"/>
    <property type="project" value="UniProtKB-SubCell"/>
</dbReference>
<dbReference type="GO" id="GO:0051075">
    <property type="term" value="F:S-adenosylmethionine:tRNA ribosyltransferase-isomerase activity"/>
    <property type="evidence" value="ECO:0007669"/>
    <property type="project" value="UniProtKB-EC"/>
</dbReference>
<dbReference type="GO" id="GO:0008616">
    <property type="term" value="P:queuosine biosynthetic process"/>
    <property type="evidence" value="ECO:0007669"/>
    <property type="project" value="UniProtKB-UniRule"/>
</dbReference>
<dbReference type="GO" id="GO:0002099">
    <property type="term" value="P:tRNA wobble guanine modification"/>
    <property type="evidence" value="ECO:0007669"/>
    <property type="project" value="TreeGrafter"/>
</dbReference>
<dbReference type="FunFam" id="2.40.10.240:FF:000001">
    <property type="entry name" value="S-adenosylmethionine:tRNA ribosyltransferase-isomerase"/>
    <property type="match status" value="1"/>
</dbReference>
<dbReference type="FunFam" id="3.40.1780.10:FF:000001">
    <property type="entry name" value="S-adenosylmethionine:tRNA ribosyltransferase-isomerase"/>
    <property type="match status" value="1"/>
</dbReference>
<dbReference type="Gene3D" id="2.40.10.240">
    <property type="entry name" value="QueA-like"/>
    <property type="match status" value="1"/>
</dbReference>
<dbReference type="Gene3D" id="3.40.1780.10">
    <property type="entry name" value="QueA-like"/>
    <property type="match status" value="1"/>
</dbReference>
<dbReference type="HAMAP" id="MF_00113">
    <property type="entry name" value="QueA"/>
    <property type="match status" value="1"/>
</dbReference>
<dbReference type="InterPro" id="IPR003699">
    <property type="entry name" value="QueA"/>
</dbReference>
<dbReference type="InterPro" id="IPR042118">
    <property type="entry name" value="QueA_dom1"/>
</dbReference>
<dbReference type="InterPro" id="IPR042119">
    <property type="entry name" value="QueA_dom2"/>
</dbReference>
<dbReference type="InterPro" id="IPR036100">
    <property type="entry name" value="QueA_sf"/>
</dbReference>
<dbReference type="NCBIfam" id="NF001140">
    <property type="entry name" value="PRK00147.1"/>
    <property type="match status" value="1"/>
</dbReference>
<dbReference type="NCBIfam" id="TIGR00113">
    <property type="entry name" value="queA"/>
    <property type="match status" value="1"/>
</dbReference>
<dbReference type="PANTHER" id="PTHR30307">
    <property type="entry name" value="S-ADENOSYLMETHIONINE:TRNA RIBOSYLTRANSFERASE-ISOMERASE"/>
    <property type="match status" value="1"/>
</dbReference>
<dbReference type="PANTHER" id="PTHR30307:SF0">
    <property type="entry name" value="S-ADENOSYLMETHIONINE:TRNA RIBOSYLTRANSFERASE-ISOMERASE"/>
    <property type="match status" value="1"/>
</dbReference>
<dbReference type="Pfam" id="PF02547">
    <property type="entry name" value="Queuosine_synth"/>
    <property type="match status" value="1"/>
</dbReference>
<dbReference type="SUPFAM" id="SSF111337">
    <property type="entry name" value="QueA-like"/>
    <property type="match status" value="1"/>
</dbReference>
<comment type="function">
    <text evidence="1">Transfers and isomerizes the ribose moiety from AdoMet to the 7-aminomethyl group of 7-deazaguanine (preQ1-tRNA) to give epoxyqueuosine (oQ-tRNA).</text>
</comment>
<comment type="catalytic activity">
    <reaction evidence="1">
        <text>7-aminomethyl-7-carbaguanosine(34) in tRNA + S-adenosyl-L-methionine = epoxyqueuosine(34) in tRNA + adenine + L-methionine + 2 H(+)</text>
        <dbReference type="Rhea" id="RHEA:32155"/>
        <dbReference type="Rhea" id="RHEA-COMP:10342"/>
        <dbReference type="Rhea" id="RHEA-COMP:18582"/>
        <dbReference type="ChEBI" id="CHEBI:15378"/>
        <dbReference type="ChEBI" id="CHEBI:16708"/>
        <dbReference type="ChEBI" id="CHEBI:57844"/>
        <dbReference type="ChEBI" id="CHEBI:59789"/>
        <dbReference type="ChEBI" id="CHEBI:82833"/>
        <dbReference type="ChEBI" id="CHEBI:194443"/>
        <dbReference type="EC" id="2.4.99.17"/>
    </reaction>
</comment>
<comment type="pathway">
    <text evidence="1">tRNA modification; tRNA-queuosine biosynthesis.</text>
</comment>
<comment type="subunit">
    <text evidence="1">Monomer.</text>
</comment>
<comment type="subcellular location">
    <subcellularLocation>
        <location evidence="1">Cytoplasm</location>
    </subcellularLocation>
</comment>
<comment type="similarity">
    <text evidence="1">Belongs to the QueA family.</text>
</comment>
<feature type="chain" id="PRO_1000094775" description="S-adenosylmethionine:tRNA ribosyltransferase-isomerase">
    <location>
        <begin position="1"/>
        <end position="355"/>
    </location>
</feature>
<evidence type="ECO:0000255" key="1">
    <source>
        <dbReference type="HAMAP-Rule" id="MF_00113"/>
    </source>
</evidence>